<accession>Q5XCB9</accession>
<accession>P82568</accession>
<protein>
    <recommendedName>
        <fullName>Putative NAD(P)H nitroreductase Spy0809</fullName>
        <ecNumber>1.-.-.-</ecNumber>
    </recommendedName>
</protein>
<gene>
    <name type="ordered locus">M6_Spy0809</name>
</gene>
<evidence type="ECO:0000255" key="1"/>
<evidence type="ECO:0000269" key="2">
    <source ref="2"/>
</evidence>
<evidence type="ECO:0000305" key="3"/>
<evidence type="ECO:0000312" key="4">
    <source>
        <dbReference type="EMBL" id="AAT86944.1"/>
    </source>
</evidence>
<comment type="cofactor">
    <cofactor evidence="3">
        <name>FMN</name>
        <dbReference type="ChEBI" id="CHEBI:58210"/>
    </cofactor>
</comment>
<comment type="mass spectrometry"/>
<comment type="similarity">
    <text evidence="1">Belongs to the nitroreductase family.</text>
</comment>
<feature type="chain" id="PRO_0000259700" description="Putative NAD(P)H nitroreductase Spy0809">
    <location>
        <begin position="1"/>
        <end position="200"/>
    </location>
</feature>
<keyword id="KW-0903">Direct protein sequencing</keyword>
<keyword id="KW-0285">Flavoprotein</keyword>
<keyword id="KW-0288">FMN</keyword>
<keyword id="KW-0520">NAD</keyword>
<keyword id="KW-0521">NADP</keyword>
<keyword id="KW-0560">Oxidoreductase</keyword>
<proteinExistence type="evidence at protein level"/>
<dbReference type="EC" id="1.-.-.-"/>
<dbReference type="EMBL" id="CP000003">
    <property type="protein sequence ID" value="AAT86944.1"/>
    <property type="molecule type" value="Genomic_DNA"/>
</dbReference>
<dbReference type="RefSeq" id="WP_011184478.1">
    <property type="nucleotide sequence ID" value="NC_006086.1"/>
</dbReference>
<dbReference type="SMR" id="Q5XCB9"/>
<dbReference type="KEGG" id="spa:M6_Spy0809"/>
<dbReference type="HOGENOM" id="CLU_070764_4_5_9"/>
<dbReference type="Proteomes" id="UP000001167">
    <property type="component" value="Chromosome"/>
</dbReference>
<dbReference type="GO" id="GO:0016491">
    <property type="term" value="F:oxidoreductase activity"/>
    <property type="evidence" value="ECO:0007669"/>
    <property type="project" value="UniProtKB-KW"/>
</dbReference>
<dbReference type="Gene3D" id="3.40.109.10">
    <property type="entry name" value="NADH Oxidase"/>
    <property type="match status" value="1"/>
</dbReference>
<dbReference type="InterPro" id="IPR029479">
    <property type="entry name" value="Nitroreductase"/>
</dbReference>
<dbReference type="InterPro" id="IPR000415">
    <property type="entry name" value="Nitroreductase-like"/>
</dbReference>
<dbReference type="PANTHER" id="PTHR43673">
    <property type="entry name" value="NAD(P)H NITROREDUCTASE YDGI-RELATED"/>
    <property type="match status" value="1"/>
</dbReference>
<dbReference type="PANTHER" id="PTHR43673:SF10">
    <property type="entry name" value="NADH DEHYDROGENASE_NAD(P)H NITROREDUCTASE XCC3605-RELATED"/>
    <property type="match status" value="1"/>
</dbReference>
<dbReference type="Pfam" id="PF00881">
    <property type="entry name" value="Nitroreductase"/>
    <property type="match status" value="1"/>
</dbReference>
<dbReference type="SUPFAM" id="SSF55469">
    <property type="entry name" value="FMN-dependent nitroreductase-like"/>
    <property type="match status" value="1"/>
</dbReference>
<sequence>MKFLELNKKRHAIKTFNDQPVDYEDLRTAIEIATLAPSANNIQPWKFVVVQEKKAELAKGLPLANKVQVEQAQYVVALFSDTDLALRSRKIARIGVKSLPDDLIGYYMETLPPRFAAFNEVQTGEYLAINAGIVAMNLVLSLTDQKIASNIILGFDKSTTNGILDIDPRFRPELLITVGYSDEKPEPSYRLPVDEVIERR</sequence>
<name>Y809_STRP6</name>
<reference evidence="4" key="1">
    <citation type="journal article" date="2004" name="J. Infect. Dis.">
        <title>Progress toward characterization of the group A Streptococcus metagenome: complete genome sequence of a macrolide-resistant serotype M6 strain.</title>
        <authorList>
            <person name="Banks D.J."/>
            <person name="Porcella S.F."/>
            <person name="Barbian K.D."/>
            <person name="Beres S.B."/>
            <person name="Philips L.E."/>
            <person name="Voyich J.M."/>
            <person name="DeLeo F.R."/>
            <person name="Martin J.M."/>
            <person name="Somerville G.A."/>
            <person name="Musser J.M."/>
        </authorList>
    </citation>
    <scope>NUCLEOTIDE SEQUENCE [LARGE SCALE GENOMIC DNA]</scope>
    <source>
        <strain>ATCC BAA-946 / MGAS10394</strain>
    </source>
</reference>
<reference evidence="3" key="2">
    <citation type="submission" date="2000-05" db="UniProtKB">
        <title>Two-dimensional gel electrophoresis map of Streptococcus pyogenes proteins.</title>
        <authorList>
            <person name="Hogan D.A."/>
            <person name="Du P."/>
            <person name="Stevenson T.I."/>
            <person name="Whitton M."/>
            <person name="Kilby G.W."/>
            <person name="Rogers J."/>
            <person name="VanBogelen R.A."/>
        </authorList>
    </citation>
    <scope>PROTEIN SEQUENCE OF 191-199</scope>
    <scope>MASS SPECTROMETRY</scope>
    <source>
        <strain evidence="2">JRS4 / Serotype M6</strain>
    </source>
</reference>
<organism>
    <name type="scientific">Streptococcus pyogenes serotype M6 (strain ATCC BAA-946 / MGAS10394)</name>
    <dbReference type="NCBI Taxonomy" id="286636"/>
    <lineage>
        <taxon>Bacteria</taxon>
        <taxon>Bacillati</taxon>
        <taxon>Bacillota</taxon>
        <taxon>Bacilli</taxon>
        <taxon>Lactobacillales</taxon>
        <taxon>Streptococcaceae</taxon>
        <taxon>Streptococcus</taxon>
    </lineage>
</organism>